<feature type="chain" id="PRO_0000220325" description="Glutathione-dependent formaldehyde-activating enzyme">
    <location>
        <begin position="1"/>
        <end position="191"/>
    </location>
</feature>
<feature type="domain" description="CENP-V/GFA" evidence="2">
    <location>
        <begin position="22"/>
        <end position="169"/>
    </location>
</feature>
<feature type="binding site" evidence="1 2">
    <location>
        <position position="29"/>
    </location>
    <ligand>
        <name>Zn(2+)</name>
        <dbReference type="ChEBI" id="CHEBI:29105"/>
        <label>1</label>
        <note>structural</note>
    </ligand>
</feature>
<feature type="binding site" evidence="1 2">
    <location>
        <position position="31"/>
    </location>
    <ligand>
        <name>Zn(2+)</name>
        <dbReference type="ChEBI" id="CHEBI:29105"/>
        <label>1</label>
        <note>structural</note>
    </ligand>
</feature>
<feature type="binding site" evidence="1 2">
    <location>
        <position position="50"/>
    </location>
    <ligand>
        <name>Zn(2+)</name>
        <dbReference type="ChEBI" id="CHEBI:29105"/>
        <label>2</label>
        <note>catalytic</note>
    </ligand>
</feature>
<feature type="binding site" evidence="1 2">
    <location>
        <position position="52"/>
    </location>
    <ligand>
        <name>Zn(2+)</name>
        <dbReference type="ChEBI" id="CHEBI:29105"/>
        <label>2</label>
        <note>catalytic</note>
    </ligand>
</feature>
<feature type="binding site" evidence="1 2">
    <location>
        <position position="55"/>
    </location>
    <ligand>
        <name>Zn(2+)</name>
        <dbReference type="ChEBI" id="CHEBI:29105"/>
        <label>2</label>
        <note>catalytic</note>
    </ligand>
</feature>
<feature type="binding site" evidence="1 2">
    <location>
        <position position="97"/>
    </location>
    <ligand>
        <name>Zn(2+)</name>
        <dbReference type="ChEBI" id="CHEBI:29105"/>
        <label>1</label>
        <note>structural</note>
    </ligand>
</feature>
<feature type="binding site" evidence="1 2">
    <location>
        <position position="100"/>
    </location>
    <ligand>
        <name>Zn(2+)</name>
        <dbReference type="ChEBI" id="CHEBI:29105"/>
        <label>1</label>
        <note>structural</note>
    </ligand>
</feature>
<proteinExistence type="inferred from homology"/>
<protein>
    <recommendedName>
        <fullName evidence="1">Glutathione-dependent formaldehyde-activating enzyme</fullName>
        <ecNumber evidence="1">4.4.1.22</ecNumber>
    </recommendedName>
    <alternativeName>
        <fullName evidence="1">S-(hydroxymethyl)glutathione synthase</fullName>
    </alternativeName>
</protein>
<keyword id="KW-0456">Lyase</keyword>
<keyword id="KW-0479">Metal-binding</keyword>
<keyword id="KW-1185">Reference proteome</keyword>
<keyword id="KW-0862">Zinc</keyword>
<comment type="function">
    <text evidence="1">Catalyzes the condensation of formaldehyde and glutathione to S-hydroxymethylglutathione.</text>
</comment>
<comment type="catalytic activity">
    <reaction evidence="1">
        <text>S-(hydroxymethyl)glutathione = glutathione + formaldehyde</text>
        <dbReference type="Rhea" id="RHEA:22488"/>
        <dbReference type="ChEBI" id="CHEBI:16842"/>
        <dbReference type="ChEBI" id="CHEBI:57925"/>
        <dbReference type="ChEBI" id="CHEBI:58758"/>
        <dbReference type="EC" id="4.4.1.22"/>
    </reaction>
</comment>
<comment type="cofactor">
    <cofactor evidence="1 2">
        <name>Zn(2+)</name>
        <dbReference type="ChEBI" id="CHEBI:29105"/>
    </cofactor>
    <text evidence="1 2">Binds 2 Zn(2+) ions per subunit.</text>
</comment>
<comment type="pathway">
    <text evidence="1">One-carbon metabolism; formaldehyde degradation; formate from formaldehyde (glutathione route): step 1/3.</text>
</comment>
<comment type="similarity">
    <text evidence="1">Belongs to the Gfa family.</text>
</comment>
<name>GFA_XANCP</name>
<organism>
    <name type="scientific">Xanthomonas campestris pv. campestris (strain ATCC 33913 / DSM 3586 / NCPPB 528 / LMG 568 / P 25)</name>
    <dbReference type="NCBI Taxonomy" id="190485"/>
    <lineage>
        <taxon>Bacteria</taxon>
        <taxon>Pseudomonadati</taxon>
        <taxon>Pseudomonadota</taxon>
        <taxon>Gammaproteobacteria</taxon>
        <taxon>Lysobacterales</taxon>
        <taxon>Lysobacteraceae</taxon>
        <taxon>Xanthomonas</taxon>
    </lineage>
</organism>
<accession>Q8P5F3</accession>
<evidence type="ECO:0000255" key="1">
    <source>
        <dbReference type="HAMAP-Rule" id="MF_00723"/>
    </source>
</evidence>
<evidence type="ECO:0000255" key="2">
    <source>
        <dbReference type="PROSITE-ProRule" id="PRU01239"/>
    </source>
</evidence>
<gene>
    <name evidence="1" type="primary">gfa</name>
    <name type="ordered locus">XCC3388</name>
</gene>
<reference key="1">
    <citation type="journal article" date="2002" name="Nature">
        <title>Comparison of the genomes of two Xanthomonas pathogens with differing host specificities.</title>
        <authorList>
            <person name="da Silva A.C.R."/>
            <person name="Ferro J.A."/>
            <person name="Reinach F.C."/>
            <person name="Farah C.S."/>
            <person name="Furlan L.R."/>
            <person name="Quaggio R.B."/>
            <person name="Monteiro-Vitorello C.B."/>
            <person name="Van Sluys M.A."/>
            <person name="Almeida N.F. Jr."/>
            <person name="Alves L.M.C."/>
            <person name="do Amaral A.M."/>
            <person name="Bertolini M.C."/>
            <person name="Camargo L.E.A."/>
            <person name="Camarotte G."/>
            <person name="Cannavan F."/>
            <person name="Cardozo J."/>
            <person name="Chambergo F."/>
            <person name="Ciapina L.P."/>
            <person name="Cicarelli R.M.B."/>
            <person name="Coutinho L.L."/>
            <person name="Cursino-Santos J.R."/>
            <person name="El-Dorry H."/>
            <person name="Faria J.B."/>
            <person name="Ferreira A.J.S."/>
            <person name="Ferreira R.C.C."/>
            <person name="Ferro M.I.T."/>
            <person name="Formighieri E.F."/>
            <person name="Franco M.C."/>
            <person name="Greggio C.C."/>
            <person name="Gruber A."/>
            <person name="Katsuyama A.M."/>
            <person name="Kishi L.T."/>
            <person name="Leite R.P."/>
            <person name="Lemos E.G.M."/>
            <person name="Lemos M.V.F."/>
            <person name="Locali E.C."/>
            <person name="Machado M.A."/>
            <person name="Madeira A.M.B.N."/>
            <person name="Martinez-Rossi N.M."/>
            <person name="Martins E.C."/>
            <person name="Meidanis J."/>
            <person name="Menck C.F.M."/>
            <person name="Miyaki C.Y."/>
            <person name="Moon D.H."/>
            <person name="Moreira L.M."/>
            <person name="Novo M.T.M."/>
            <person name="Okura V.K."/>
            <person name="Oliveira M.C."/>
            <person name="Oliveira V.R."/>
            <person name="Pereira H.A."/>
            <person name="Rossi A."/>
            <person name="Sena J.A.D."/>
            <person name="Silva C."/>
            <person name="de Souza R.F."/>
            <person name="Spinola L.A.F."/>
            <person name="Takita M.A."/>
            <person name="Tamura R.E."/>
            <person name="Teixeira E.C."/>
            <person name="Tezza R.I.D."/>
            <person name="Trindade dos Santos M."/>
            <person name="Truffi D."/>
            <person name="Tsai S.M."/>
            <person name="White F.F."/>
            <person name="Setubal J.C."/>
            <person name="Kitajima J.P."/>
        </authorList>
    </citation>
    <scope>NUCLEOTIDE SEQUENCE [LARGE SCALE GENOMIC DNA]</scope>
    <source>
        <strain>ATCC 33913 / DSM 3586 / NCPPB 528 / LMG 568 / P 25</strain>
    </source>
</reference>
<dbReference type="EC" id="4.4.1.22" evidence="1"/>
<dbReference type="EMBL" id="AE008922">
    <property type="protein sequence ID" value="AAM42658.1"/>
    <property type="molecule type" value="Genomic_DNA"/>
</dbReference>
<dbReference type="RefSeq" id="NP_638734.1">
    <property type="nucleotide sequence ID" value="NC_003902.1"/>
</dbReference>
<dbReference type="RefSeq" id="WP_011038486.1">
    <property type="nucleotide sequence ID" value="NC_003902.1"/>
</dbReference>
<dbReference type="SMR" id="Q8P5F3"/>
<dbReference type="STRING" id="190485.XCC3388"/>
<dbReference type="EnsemblBacteria" id="AAM42658">
    <property type="protein sequence ID" value="AAM42658"/>
    <property type="gene ID" value="XCC3388"/>
</dbReference>
<dbReference type="KEGG" id="xcc:XCC3388"/>
<dbReference type="PATRIC" id="fig|190485.4.peg.3623"/>
<dbReference type="eggNOG" id="COG3791">
    <property type="taxonomic scope" value="Bacteria"/>
</dbReference>
<dbReference type="HOGENOM" id="CLU_090716_0_0_6"/>
<dbReference type="OrthoDB" id="9011205at2"/>
<dbReference type="UniPathway" id="UPA00562">
    <property type="reaction ID" value="UER00621"/>
</dbReference>
<dbReference type="Proteomes" id="UP000001010">
    <property type="component" value="Chromosome"/>
</dbReference>
<dbReference type="GO" id="GO:0051907">
    <property type="term" value="F:S-(hydroxymethyl)glutathione synthase activity"/>
    <property type="evidence" value="ECO:0007669"/>
    <property type="project" value="UniProtKB-UniRule"/>
</dbReference>
<dbReference type="GO" id="GO:0008270">
    <property type="term" value="F:zinc ion binding"/>
    <property type="evidence" value="ECO:0007669"/>
    <property type="project" value="UniProtKB-UniRule"/>
</dbReference>
<dbReference type="GO" id="GO:0046294">
    <property type="term" value="P:formaldehyde catabolic process"/>
    <property type="evidence" value="ECO:0007669"/>
    <property type="project" value="UniProtKB-UniRule"/>
</dbReference>
<dbReference type="Gene3D" id="3.90.1590.10">
    <property type="entry name" value="glutathione-dependent formaldehyde- activating enzyme (gfa)"/>
    <property type="match status" value="1"/>
</dbReference>
<dbReference type="HAMAP" id="MF_00723">
    <property type="entry name" value="Formald_GSH"/>
    <property type="match status" value="1"/>
</dbReference>
<dbReference type="InterPro" id="IPR006913">
    <property type="entry name" value="CENP-V/GFA"/>
</dbReference>
<dbReference type="InterPro" id="IPR014185">
    <property type="entry name" value="Formald_GSH"/>
</dbReference>
<dbReference type="InterPro" id="IPR011057">
    <property type="entry name" value="Mss4-like_sf"/>
</dbReference>
<dbReference type="NCBIfam" id="TIGR02820">
    <property type="entry name" value="formald_GSH"/>
    <property type="match status" value="1"/>
</dbReference>
<dbReference type="NCBIfam" id="NF003829">
    <property type="entry name" value="PRK05417.1"/>
    <property type="match status" value="1"/>
</dbReference>
<dbReference type="PANTHER" id="PTHR33337:SF40">
    <property type="entry name" value="CENP-V_GFA DOMAIN-CONTAINING PROTEIN-RELATED"/>
    <property type="match status" value="1"/>
</dbReference>
<dbReference type="PANTHER" id="PTHR33337">
    <property type="entry name" value="GFA DOMAIN-CONTAINING PROTEIN"/>
    <property type="match status" value="1"/>
</dbReference>
<dbReference type="Pfam" id="PF04828">
    <property type="entry name" value="GFA"/>
    <property type="match status" value="1"/>
</dbReference>
<dbReference type="PIRSF" id="PIRSF033318">
    <property type="entry name" value="Formald_GSH"/>
    <property type="match status" value="1"/>
</dbReference>
<dbReference type="SUPFAM" id="SSF51316">
    <property type="entry name" value="Mss4-like"/>
    <property type="match status" value="1"/>
</dbReference>
<dbReference type="PROSITE" id="PS51891">
    <property type="entry name" value="CENP_V_GFA"/>
    <property type="match status" value="1"/>
</dbReference>
<sequence>MANVSIHPAVDGGVVHGSTEGFAGGTLQCLCASNKVTVDVASQSAHNHACGCSKCWKPEGAKFSVVAVAPRDKVTVTAHPEKLKIVDESATIQRHACTGCGVHLYGRIENKDHAFYGLDFIHTELSQQSGWSPPGFAAFVSSIIETGTPPDQMDGVRARLTELGLTPYDCLSPALMDALSTNVARHKGLLH</sequence>